<keyword id="KW-0002">3D-structure</keyword>
<keyword id="KW-0067">ATP-binding</keyword>
<keyword id="KW-0436">Ligase</keyword>
<keyword id="KW-0460">Magnesium</keyword>
<keyword id="KW-0464">Manganese</keyword>
<keyword id="KW-0479">Metal-binding</keyword>
<keyword id="KW-0547">Nucleotide-binding</keyword>
<keyword id="KW-0658">Purine biosynthesis</keyword>
<keyword id="KW-1185">Reference proteome</keyword>
<sequence length="400" mass="44326">MKAVRVHILGSGGREHAIGWAFAKQGYEVHFYPGNAGTKRDGTNHPYEGEKTLKAIPEEDIVIPGSEEFLVEGVSNWRSNVFGPVKEVARLEGSKVYAKRFMKKYGIRTARFEVAETPEELREKIKKFSPPYVIKADGLARGKGVLILDSKEETIEKGSKLIIGELIKGVKGPVVIDEFLAGNELSAMAVVNGRNFVILPFVRDYKRLMDGDRGPNTGGMGSWGPVEIPSDTIKKIEELFDKTLWGVEKEGYAYRGFLYLGLMLHDGDPYILEYNVRLGDPETEVIVTLNPEGFVNAVLEGYRGGKMEPVEPRGFAVDVVLAARGYPDAPEKGKEITLPEEGLIFFAGVAEKDGKLVTNGGRVLHCMGTGETKEEARRKAYELAEKVHFEGKTYRRDIAL</sequence>
<organism>
    <name type="scientific">Thermotoga maritima (strain ATCC 43589 / DSM 3109 / JCM 10099 / NBRC 100826 / MSB8)</name>
    <dbReference type="NCBI Taxonomy" id="243274"/>
    <lineage>
        <taxon>Bacteria</taxon>
        <taxon>Thermotogati</taxon>
        <taxon>Thermotogota</taxon>
        <taxon>Thermotogae</taxon>
        <taxon>Thermotogales</taxon>
        <taxon>Thermotogaceae</taxon>
        <taxon>Thermotoga</taxon>
    </lineage>
</organism>
<protein>
    <recommendedName>
        <fullName evidence="2">Phosphoribosylamine--glycine ligase</fullName>
        <ecNumber evidence="2">6.3.4.13</ecNumber>
    </recommendedName>
    <alternativeName>
        <fullName evidence="2">GARS</fullName>
    </alternativeName>
    <alternativeName>
        <fullName evidence="2">Glycinamide ribonucleotide synthetase</fullName>
    </alternativeName>
    <alternativeName>
        <fullName evidence="2">Phosphoribosylglycinamide synthetase</fullName>
    </alternativeName>
</protein>
<evidence type="ECO:0000250" key="1"/>
<evidence type="ECO:0000255" key="2">
    <source>
        <dbReference type="HAMAP-Rule" id="MF_00138"/>
    </source>
</evidence>
<evidence type="ECO:0007829" key="3">
    <source>
        <dbReference type="PDB" id="1VKZ"/>
    </source>
</evidence>
<name>PUR2_THEMA</name>
<comment type="catalytic activity">
    <reaction evidence="2">
        <text>5-phospho-beta-D-ribosylamine + glycine + ATP = N(1)-(5-phospho-beta-D-ribosyl)glycinamide + ADP + phosphate + H(+)</text>
        <dbReference type="Rhea" id="RHEA:17453"/>
        <dbReference type="ChEBI" id="CHEBI:15378"/>
        <dbReference type="ChEBI" id="CHEBI:30616"/>
        <dbReference type="ChEBI" id="CHEBI:43474"/>
        <dbReference type="ChEBI" id="CHEBI:57305"/>
        <dbReference type="ChEBI" id="CHEBI:58681"/>
        <dbReference type="ChEBI" id="CHEBI:143788"/>
        <dbReference type="ChEBI" id="CHEBI:456216"/>
        <dbReference type="EC" id="6.3.4.13"/>
    </reaction>
</comment>
<comment type="cofactor">
    <cofactor evidence="1">
        <name>Mg(2+)</name>
        <dbReference type="ChEBI" id="CHEBI:18420"/>
    </cofactor>
    <cofactor evidence="1">
        <name>Mn(2+)</name>
        <dbReference type="ChEBI" id="CHEBI:29035"/>
    </cofactor>
    <text evidence="1">Binds 1 Mg(2+) or Mn(2+) ion per subunit.</text>
</comment>
<comment type="pathway">
    <text evidence="2">Purine metabolism; IMP biosynthesis via de novo pathway; N(1)-(5-phospho-D-ribosyl)glycinamide from 5-phospho-alpha-D-ribose 1-diphosphate: step 2/2.</text>
</comment>
<comment type="similarity">
    <text evidence="2">Belongs to the GARS family.</text>
</comment>
<dbReference type="EC" id="6.3.4.13" evidence="2"/>
<dbReference type="EMBL" id="AE000512">
    <property type="protein sequence ID" value="AAD36325.1"/>
    <property type="molecule type" value="Genomic_DNA"/>
</dbReference>
<dbReference type="PIR" id="D72277">
    <property type="entry name" value="D72277"/>
</dbReference>
<dbReference type="RefSeq" id="NP_229055.1">
    <property type="nucleotide sequence ID" value="NC_000853.1"/>
</dbReference>
<dbReference type="PDB" id="1VKZ">
    <property type="method" value="X-ray"/>
    <property type="resolution" value="2.30 A"/>
    <property type="chains" value="A/B=1-400"/>
</dbReference>
<dbReference type="PDBsum" id="1VKZ"/>
<dbReference type="SMR" id="Q9X0X7"/>
<dbReference type="FunCoup" id="Q9X0X7">
    <property type="interactions" value="335"/>
</dbReference>
<dbReference type="STRING" id="243274.TM_1250"/>
<dbReference type="PaxDb" id="243274-THEMA_08085"/>
<dbReference type="DNASU" id="898233"/>
<dbReference type="EnsemblBacteria" id="AAD36325">
    <property type="protein sequence ID" value="AAD36325"/>
    <property type="gene ID" value="TM_1250"/>
</dbReference>
<dbReference type="KEGG" id="tma:TM1250"/>
<dbReference type="KEGG" id="tmi:THEMA_08085"/>
<dbReference type="PATRIC" id="fig|243274.18.peg.1564"/>
<dbReference type="eggNOG" id="COG0151">
    <property type="taxonomic scope" value="Bacteria"/>
</dbReference>
<dbReference type="InParanoid" id="Q9X0X7"/>
<dbReference type="OrthoDB" id="9807240at2"/>
<dbReference type="UniPathway" id="UPA00074">
    <property type="reaction ID" value="UER00125"/>
</dbReference>
<dbReference type="EvolutionaryTrace" id="Q9X0X7"/>
<dbReference type="Proteomes" id="UP000008183">
    <property type="component" value="Chromosome"/>
</dbReference>
<dbReference type="GO" id="GO:0005524">
    <property type="term" value="F:ATP binding"/>
    <property type="evidence" value="ECO:0007669"/>
    <property type="project" value="UniProtKB-KW"/>
</dbReference>
<dbReference type="GO" id="GO:0046872">
    <property type="term" value="F:metal ion binding"/>
    <property type="evidence" value="ECO:0007669"/>
    <property type="project" value="UniProtKB-KW"/>
</dbReference>
<dbReference type="GO" id="GO:0004637">
    <property type="term" value="F:phosphoribosylamine-glycine ligase activity"/>
    <property type="evidence" value="ECO:0007669"/>
    <property type="project" value="UniProtKB-UniRule"/>
</dbReference>
<dbReference type="GO" id="GO:0006189">
    <property type="term" value="P:'de novo' IMP biosynthetic process"/>
    <property type="evidence" value="ECO:0007669"/>
    <property type="project" value="UniProtKB-UniRule"/>
</dbReference>
<dbReference type="GO" id="GO:0009113">
    <property type="term" value="P:purine nucleobase biosynthetic process"/>
    <property type="evidence" value="ECO:0007669"/>
    <property type="project" value="InterPro"/>
</dbReference>
<dbReference type="Gene3D" id="3.40.50.20">
    <property type="match status" value="1"/>
</dbReference>
<dbReference type="Gene3D" id="3.30.1490.20">
    <property type="entry name" value="ATP-grasp fold, A domain"/>
    <property type="match status" value="1"/>
</dbReference>
<dbReference type="Gene3D" id="3.30.470.20">
    <property type="entry name" value="ATP-grasp fold, B domain"/>
    <property type="match status" value="1"/>
</dbReference>
<dbReference type="Gene3D" id="3.90.600.10">
    <property type="entry name" value="Phosphoribosylglycinamide synthetase, C-terminal domain"/>
    <property type="match status" value="1"/>
</dbReference>
<dbReference type="HAMAP" id="MF_00138">
    <property type="entry name" value="GARS"/>
    <property type="match status" value="1"/>
</dbReference>
<dbReference type="InterPro" id="IPR011761">
    <property type="entry name" value="ATP-grasp"/>
</dbReference>
<dbReference type="InterPro" id="IPR013815">
    <property type="entry name" value="ATP_grasp_subdomain_1"/>
</dbReference>
<dbReference type="InterPro" id="IPR016185">
    <property type="entry name" value="PreATP-grasp_dom_sf"/>
</dbReference>
<dbReference type="InterPro" id="IPR020561">
    <property type="entry name" value="PRibGlycinamid_synth_ATP-grasp"/>
</dbReference>
<dbReference type="InterPro" id="IPR000115">
    <property type="entry name" value="PRibGlycinamide_synth"/>
</dbReference>
<dbReference type="InterPro" id="IPR020560">
    <property type="entry name" value="PRibGlycinamide_synth_C-dom"/>
</dbReference>
<dbReference type="InterPro" id="IPR037123">
    <property type="entry name" value="PRibGlycinamide_synth_C_sf"/>
</dbReference>
<dbReference type="InterPro" id="IPR020559">
    <property type="entry name" value="PRibGlycinamide_synth_CS"/>
</dbReference>
<dbReference type="InterPro" id="IPR020562">
    <property type="entry name" value="PRibGlycinamide_synth_N"/>
</dbReference>
<dbReference type="InterPro" id="IPR011054">
    <property type="entry name" value="Rudment_hybrid_motif"/>
</dbReference>
<dbReference type="NCBIfam" id="TIGR00877">
    <property type="entry name" value="purD"/>
    <property type="match status" value="1"/>
</dbReference>
<dbReference type="PANTHER" id="PTHR43472">
    <property type="entry name" value="PHOSPHORIBOSYLAMINE--GLYCINE LIGASE"/>
    <property type="match status" value="1"/>
</dbReference>
<dbReference type="PANTHER" id="PTHR43472:SF1">
    <property type="entry name" value="PHOSPHORIBOSYLAMINE--GLYCINE LIGASE, CHLOROPLASTIC"/>
    <property type="match status" value="1"/>
</dbReference>
<dbReference type="Pfam" id="PF01071">
    <property type="entry name" value="GARS_A"/>
    <property type="match status" value="1"/>
</dbReference>
<dbReference type="Pfam" id="PF02843">
    <property type="entry name" value="GARS_C"/>
    <property type="match status" value="1"/>
</dbReference>
<dbReference type="Pfam" id="PF02844">
    <property type="entry name" value="GARS_N"/>
    <property type="match status" value="1"/>
</dbReference>
<dbReference type="SMART" id="SM01209">
    <property type="entry name" value="GARS_A"/>
    <property type="match status" value="1"/>
</dbReference>
<dbReference type="SMART" id="SM01210">
    <property type="entry name" value="GARS_C"/>
    <property type="match status" value="1"/>
</dbReference>
<dbReference type="SUPFAM" id="SSF56059">
    <property type="entry name" value="Glutathione synthetase ATP-binding domain-like"/>
    <property type="match status" value="1"/>
</dbReference>
<dbReference type="SUPFAM" id="SSF52440">
    <property type="entry name" value="PreATP-grasp domain"/>
    <property type="match status" value="1"/>
</dbReference>
<dbReference type="SUPFAM" id="SSF51246">
    <property type="entry name" value="Rudiment single hybrid motif"/>
    <property type="match status" value="1"/>
</dbReference>
<dbReference type="PROSITE" id="PS50975">
    <property type="entry name" value="ATP_GRASP"/>
    <property type="match status" value="1"/>
</dbReference>
<dbReference type="PROSITE" id="PS00184">
    <property type="entry name" value="GARS"/>
    <property type="match status" value="1"/>
</dbReference>
<gene>
    <name evidence="2" type="primary">purD</name>
    <name type="ordered locus">TM_1250</name>
</gene>
<accession>Q9X0X7</accession>
<feature type="chain" id="PRO_0000151495" description="Phosphoribosylamine--glycine ligase">
    <location>
        <begin position="1"/>
        <end position="400"/>
    </location>
</feature>
<feature type="domain" description="ATP-grasp" evidence="2">
    <location>
        <begin position="99"/>
        <end position="303"/>
    </location>
</feature>
<feature type="binding site" evidence="2">
    <location>
        <begin position="125"/>
        <end position="186"/>
    </location>
    <ligand>
        <name>ATP</name>
        <dbReference type="ChEBI" id="CHEBI:30616"/>
    </ligand>
</feature>
<feature type="binding site" evidence="2">
    <location>
        <position position="273"/>
    </location>
    <ligand>
        <name>Mg(2+)</name>
        <dbReference type="ChEBI" id="CHEBI:18420"/>
    </ligand>
</feature>
<feature type="binding site" evidence="2">
    <location>
        <position position="275"/>
    </location>
    <ligand>
        <name>Mg(2+)</name>
        <dbReference type="ChEBI" id="CHEBI:18420"/>
    </ligand>
</feature>
<feature type="strand" evidence="3">
    <location>
        <begin position="5"/>
        <end position="10"/>
    </location>
</feature>
<feature type="helix" evidence="3">
    <location>
        <begin position="13"/>
        <end position="24"/>
    </location>
</feature>
<feature type="strand" evidence="3">
    <location>
        <begin position="28"/>
        <end position="33"/>
    </location>
</feature>
<feature type="helix" evidence="3">
    <location>
        <begin position="38"/>
        <end position="40"/>
    </location>
</feature>
<feature type="strand" evidence="3">
    <location>
        <begin position="42"/>
        <end position="44"/>
    </location>
</feature>
<feature type="helix" evidence="3">
    <location>
        <begin position="50"/>
        <end position="54"/>
    </location>
</feature>
<feature type="helix" evidence="3">
    <location>
        <begin position="67"/>
        <end position="69"/>
    </location>
</feature>
<feature type="strand" evidence="3">
    <location>
        <begin position="81"/>
        <end position="83"/>
    </location>
</feature>
<feature type="helix" evidence="3">
    <location>
        <begin position="86"/>
        <end position="93"/>
    </location>
</feature>
<feature type="helix" evidence="3">
    <location>
        <begin position="95"/>
        <end position="104"/>
    </location>
</feature>
<feature type="strand" evidence="3">
    <location>
        <begin position="112"/>
        <end position="117"/>
    </location>
</feature>
<feature type="helix" evidence="3">
    <location>
        <begin position="118"/>
        <end position="125"/>
    </location>
</feature>
<feature type="strand" evidence="3">
    <location>
        <begin position="130"/>
        <end position="138"/>
    </location>
</feature>
<feature type="strand" evidence="3">
    <location>
        <begin position="145"/>
        <end position="150"/>
    </location>
</feature>
<feature type="helix" evidence="3">
    <location>
        <begin position="151"/>
        <end position="162"/>
    </location>
</feature>
<feature type="strand" evidence="3">
    <location>
        <begin position="165"/>
        <end position="167"/>
    </location>
</feature>
<feature type="strand" evidence="3">
    <location>
        <begin position="174"/>
        <end position="178"/>
    </location>
</feature>
<feature type="strand" evidence="3">
    <location>
        <begin position="182"/>
        <end position="192"/>
    </location>
</feature>
<feature type="strand" evidence="3">
    <location>
        <begin position="195"/>
        <end position="198"/>
    </location>
</feature>
<feature type="strand" evidence="3">
    <location>
        <begin position="207"/>
        <end position="209"/>
    </location>
</feature>
<feature type="turn" evidence="3">
    <location>
        <begin position="210"/>
        <end position="212"/>
    </location>
</feature>
<feature type="strand" evidence="3">
    <location>
        <begin position="213"/>
        <end position="216"/>
    </location>
</feature>
<feature type="strand" evidence="3">
    <location>
        <begin position="220"/>
        <end position="224"/>
    </location>
</feature>
<feature type="helix" evidence="3">
    <location>
        <begin position="230"/>
        <end position="249"/>
    </location>
</feature>
<feature type="strand" evidence="3">
    <location>
        <begin position="255"/>
        <end position="265"/>
    </location>
</feature>
<feature type="strand" evidence="3">
    <location>
        <begin position="268"/>
        <end position="277"/>
    </location>
</feature>
<feature type="helix" evidence="3">
    <location>
        <begin position="282"/>
        <end position="289"/>
    </location>
</feature>
<feature type="helix" evidence="3">
    <location>
        <begin position="291"/>
        <end position="303"/>
    </location>
</feature>
<feature type="strand" evidence="3">
    <location>
        <begin position="314"/>
        <end position="322"/>
    </location>
</feature>
<feature type="turn" evidence="3">
    <location>
        <begin position="324"/>
        <end position="328"/>
    </location>
</feature>
<feature type="strand" evidence="3">
    <location>
        <begin position="344"/>
        <end position="352"/>
    </location>
</feature>
<feature type="strand" evidence="3">
    <location>
        <begin position="355"/>
        <end position="358"/>
    </location>
</feature>
<feature type="strand" evidence="3">
    <location>
        <begin position="360"/>
        <end position="372"/>
    </location>
</feature>
<feature type="helix" evidence="3">
    <location>
        <begin position="373"/>
        <end position="386"/>
    </location>
</feature>
<reference key="1">
    <citation type="journal article" date="1999" name="Nature">
        <title>Evidence for lateral gene transfer between Archaea and Bacteria from genome sequence of Thermotoga maritima.</title>
        <authorList>
            <person name="Nelson K.E."/>
            <person name="Clayton R.A."/>
            <person name="Gill S.R."/>
            <person name="Gwinn M.L."/>
            <person name="Dodson R.J."/>
            <person name="Haft D.H."/>
            <person name="Hickey E.K."/>
            <person name="Peterson J.D."/>
            <person name="Nelson W.C."/>
            <person name="Ketchum K.A."/>
            <person name="McDonald L.A."/>
            <person name="Utterback T.R."/>
            <person name="Malek J.A."/>
            <person name="Linher K.D."/>
            <person name="Garrett M.M."/>
            <person name="Stewart A.M."/>
            <person name="Cotton M.D."/>
            <person name="Pratt M.S."/>
            <person name="Phillips C.A."/>
            <person name="Richardson D.L."/>
            <person name="Heidelberg J.F."/>
            <person name="Sutton G.G."/>
            <person name="Fleischmann R.D."/>
            <person name="Eisen J.A."/>
            <person name="White O."/>
            <person name="Salzberg S.L."/>
            <person name="Smith H.O."/>
            <person name="Venter J.C."/>
            <person name="Fraser C.M."/>
        </authorList>
    </citation>
    <scope>NUCLEOTIDE SEQUENCE [LARGE SCALE GENOMIC DNA]</scope>
    <source>
        <strain>ATCC 43589 / DSM 3109 / JCM 10099 / NBRC 100826 / MSB8</strain>
    </source>
</reference>
<proteinExistence type="evidence at protein level"/>